<organism>
    <name type="scientific">Brucella abortus (strain 2308)</name>
    <dbReference type="NCBI Taxonomy" id="359391"/>
    <lineage>
        <taxon>Bacteria</taxon>
        <taxon>Pseudomonadati</taxon>
        <taxon>Pseudomonadota</taxon>
        <taxon>Alphaproteobacteria</taxon>
        <taxon>Hyphomicrobiales</taxon>
        <taxon>Brucellaceae</taxon>
        <taxon>Brucella/Ochrobactrum group</taxon>
        <taxon>Brucella</taxon>
    </lineage>
</organism>
<proteinExistence type="inferred from homology"/>
<sequence>MSGFKSDFLRTLSERGFIHQISDESGLDELLAKETVTAYIGFDPTAPSLHAGGLIQIMMLYWLQQTGHKPVALMGGGTGMVGDPSFKDEARKLMTEDTIAENMASIKRVFANYLTFGDGANDALMVNNGEWLRNINYLEFLRDVGRHFSVNRMLSFDSVKLRLDREQSLSFLEFNYMILQAYDFVELNKRYGLRLQMGGSDQWGNIVNGIDLGHRMGTPQLYALTSPLLTTASGQKMGKSLGGAIWLNADMLSAYDFWQYWRNTEDADVERFLKLYTTLPLDEIARLAELGGAEINEAKKILATEVTAMLHGRDAAEEAAETARKTFEDGELSENLPTVGVHKATLNDGIGVLALMVLAELCTTNGEARRHVEGGAVRINDEPVSDPRMVVNAAALNDQGLIKLSLGKKRHVLIRPA</sequence>
<keyword id="KW-0030">Aminoacyl-tRNA synthetase</keyword>
<keyword id="KW-0067">ATP-binding</keyword>
<keyword id="KW-0963">Cytoplasm</keyword>
<keyword id="KW-0436">Ligase</keyword>
<keyword id="KW-0547">Nucleotide-binding</keyword>
<keyword id="KW-0648">Protein biosynthesis</keyword>
<keyword id="KW-1185">Reference proteome</keyword>
<keyword id="KW-0694">RNA-binding</keyword>
<comment type="function">
    <text evidence="1">Catalyzes the attachment of tyrosine to tRNA(Tyr) in a two-step reaction: tyrosine is first activated by ATP to form Tyr-AMP and then transferred to the acceptor end of tRNA(Tyr).</text>
</comment>
<comment type="catalytic activity">
    <reaction evidence="1">
        <text>tRNA(Tyr) + L-tyrosine + ATP = L-tyrosyl-tRNA(Tyr) + AMP + diphosphate + H(+)</text>
        <dbReference type="Rhea" id="RHEA:10220"/>
        <dbReference type="Rhea" id="RHEA-COMP:9706"/>
        <dbReference type="Rhea" id="RHEA-COMP:9707"/>
        <dbReference type="ChEBI" id="CHEBI:15378"/>
        <dbReference type="ChEBI" id="CHEBI:30616"/>
        <dbReference type="ChEBI" id="CHEBI:33019"/>
        <dbReference type="ChEBI" id="CHEBI:58315"/>
        <dbReference type="ChEBI" id="CHEBI:78442"/>
        <dbReference type="ChEBI" id="CHEBI:78536"/>
        <dbReference type="ChEBI" id="CHEBI:456215"/>
        <dbReference type="EC" id="6.1.1.1"/>
    </reaction>
</comment>
<comment type="subunit">
    <text evidence="1">Homodimer.</text>
</comment>
<comment type="subcellular location">
    <subcellularLocation>
        <location evidence="1">Cytoplasm</location>
    </subcellularLocation>
</comment>
<comment type="similarity">
    <text evidence="1">Belongs to the class-I aminoacyl-tRNA synthetase family. TyrS type 1 subfamily.</text>
</comment>
<gene>
    <name evidence="1" type="primary">tyrS</name>
    <name type="ordered locus">BAB1_0943</name>
</gene>
<accession>Q2YNR0</accession>
<protein>
    <recommendedName>
        <fullName evidence="1">Tyrosine--tRNA ligase</fullName>
        <ecNumber evidence="1">6.1.1.1</ecNumber>
    </recommendedName>
    <alternativeName>
        <fullName evidence="1">Tyrosyl-tRNA synthetase</fullName>
        <shortName evidence="1">TyrRS</shortName>
    </alternativeName>
</protein>
<evidence type="ECO:0000255" key="1">
    <source>
        <dbReference type="HAMAP-Rule" id="MF_02006"/>
    </source>
</evidence>
<feature type="chain" id="PRO_0000234689" description="Tyrosine--tRNA ligase">
    <location>
        <begin position="1"/>
        <end position="417"/>
    </location>
</feature>
<feature type="domain" description="S4 RNA-binding" evidence="1">
    <location>
        <begin position="350"/>
        <end position="417"/>
    </location>
</feature>
<feature type="short sequence motif" description="'HIGH' region">
    <location>
        <begin position="44"/>
        <end position="53"/>
    </location>
</feature>
<feature type="short sequence motif" description="'KMSKS' region">
    <location>
        <begin position="236"/>
        <end position="240"/>
    </location>
</feature>
<feature type="binding site" evidence="1">
    <location>
        <position position="39"/>
    </location>
    <ligand>
        <name>L-tyrosine</name>
        <dbReference type="ChEBI" id="CHEBI:58315"/>
    </ligand>
</feature>
<feature type="binding site" evidence="1">
    <location>
        <position position="176"/>
    </location>
    <ligand>
        <name>L-tyrosine</name>
        <dbReference type="ChEBI" id="CHEBI:58315"/>
    </ligand>
</feature>
<feature type="binding site" evidence="1">
    <location>
        <position position="180"/>
    </location>
    <ligand>
        <name>L-tyrosine</name>
        <dbReference type="ChEBI" id="CHEBI:58315"/>
    </ligand>
</feature>
<feature type="binding site" evidence="1">
    <location>
        <position position="239"/>
    </location>
    <ligand>
        <name>ATP</name>
        <dbReference type="ChEBI" id="CHEBI:30616"/>
    </ligand>
</feature>
<reference key="1">
    <citation type="journal article" date="2005" name="Infect. Immun.">
        <title>Whole-genome analyses of speciation events in pathogenic Brucellae.</title>
        <authorList>
            <person name="Chain P.S."/>
            <person name="Comerci D.J."/>
            <person name="Tolmasky M.E."/>
            <person name="Larimer F.W."/>
            <person name="Malfatti S.A."/>
            <person name="Vergez L.M."/>
            <person name="Aguero F."/>
            <person name="Land M.L."/>
            <person name="Ugalde R.A."/>
            <person name="Garcia E."/>
        </authorList>
    </citation>
    <scope>NUCLEOTIDE SEQUENCE [LARGE SCALE GENOMIC DNA]</scope>
    <source>
        <strain>2308</strain>
    </source>
</reference>
<dbReference type="EC" id="6.1.1.1" evidence="1"/>
<dbReference type="EMBL" id="AM040264">
    <property type="protein sequence ID" value="CAJ10899.1"/>
    <property type="molecule type" value="Genomic_DNA"/>
</dbReference>
<dbReference type="RefSeq" id="WP_002964050.1">
    <property type="nucleotide sequence ID" value="NZ_KN046823.1"/>
</dbReference>
<dbReference type="SMR" id="Q2YNR0"/>
<dbReference type="STRING" id="359391.BAB1_0943"/>
<dbReference type="GeneID" id="93016704"/>
<dbReference type="KEGG" id="bmf:BAB1_0943"/>
<dbReference type="PATRIC" id="fig|359391.11.peg.3259"/>
<dbReference type="HOGENOM" id="CLU_024003_0_3_5"/>
<dbReference type="PhylomeDB" id="Q2YNR0"/>
<dbReference type="Proteomes" id="UP000002719">
    <property type="component" value="Chromosome I"/>
</dbReference>
<dbReference type="GO" id="GO:0005829">
    <property type="term" value="C:cytosol"/>
    <property type="evidence" value="ECO:0007669"/>
    <property type="project" value="TreeGrafter"/>
</dbReference>
<dbReference type="GO" id="GO:0005524">
    <property type="term" value="F:ATP binding"/>
    <property type="evidence" value="ECO:0007669"/>
    <property type="project" value="UniProtKB-UniRule"/>
</dbReference>
<dbReference type="GO" id="GO:0003723">
    <property type="term" value="F:RNA binding"/>
    <property type="evidence" value="ECO:0007669"/>
    <property type="project" value="UniProtKB-KW"/>
</dbReference>
<dbReference type="GO" id="GO:0004831">
    <property type="term" value="F:tyrosine-tRNA ligase activity"/>
    <property type="evidence" value="ECO:0007669"/>
    <property type="project" value="UniProtKB-UniRule"/>
</dbReference>
<dbReference type="GO" id="GO:0006437">
    <property type="term" value="P:tyrosyl-tRNA aminoacylation"/>
    <property type="evidence" value="ECO:0007669"/>
    <property type="project" value="UniProtKB-UniRule"/>
</dbReference>
<dbReference type="CDD" id="cd00165">
    <property type="entry name" value="S4"/>
    <property type="match status" value="1"/>
</dbReference>
<dbReference type="CDD" id="cd00805">
    <property type="entry name" value="TyrRS_core"/>
    <property type="match status" value="1"/>
</dbReference>
<dbReference type="FunFam" id="1.10.240.10:FF:000001">
    <property type="entry name" value="Tyrosine--tRNA ligase"/>
    <property type="match status" value="1"/>
</dbReference>
<dbReference type="FunFam" id="3.40.50.620:FF:000008">
    <property type="entry name" value="Tyrosine--tRNA ligase"/>
    <property type="match status" value="1"/>
</dbReference>
<dbReference type="Gene3D" id="3.40.50.620">
    <property type="entry name" value="HUPs"/>
    <property type="match status" value="1"/>
</dbReference>
<dbReference type="Gene3D" id="3.10.290.10">
    <property type="entry name" value="RNA-binding S4 domain"/>
    <property type="match status" value="1"/>
</dbReference>
<dbReference type="Gene3D" id="1.10.240.10">
    <property type="entry name" value="Tyrosyl-Transfer RNA Synthetase"/>
    <property type="match status" value="1"/>
</dbReference>
<dbReference type="HAMAP" id="MF_02006">
    <property type="entry name" value="Tyr_tRNA_synth_type1"/>
    <property type="match status" value="1"/>
</dbReference>
<dbReference type="InterPro" id="IPR001412">
    <property type="entry name" value="aa-tRNA-synth_I_CS"/>
</dbReference>
<dbReference type="InterPro" id="IPR002305">
    <property type="entry name" value="aa-tRNA-synth_Ic"/>
</dbReference>
<dbReference type="InterPro" id="IPR014729">
    <property type="entry name" value="Rossmann-like_a/b/a_fold"/>
</dbReference>
<dbReference type="InterPro" id="IPR036986">
    <property type="entry name" value="S4_RNA-bd_sf"/>
</dbReference>
<dbReference type="InterPro" id="IPR054608">
    <property type="entry name" value="SYY-like_C"/>
</dbReference>
<dbReference type="InterPro" id="IPR002307">
    <property type="entry name" value="Tyr-tRNA-ligase"/>
</dbReference>
<dbReference type="InterPro" id="IPR024088">
    <property type="entry name" value="Tyr-tRNA-ligase_bac-type"/>
</dbReference>
<dbReference type="InterPro" id="IPR024107">
    <property type="entry name" value="Tyr-tRNA-ligase_bac_1"/>
</dbReference>
<dbReference type="NCBIfam" id="TIGR00234">
    <property type="entry name" value="tyrS"/>
    <property type="match status" value="1"/>
</dbReference>
<dbReference type="PANTHER" id="PTHR11766:SF0">
    <property type="entry name" value="TYROSINE--TRNA LIGASE, MITOCHONDRIAL"/>
    <property type="match status" value="1"/>
</dbReference>
<dbReference type="PANTHER" id="PTHR11766">
    <property type="entry name" value="TYROSYL-TRNA SYNTHETASE"/>
    <property type="match status" value="1"/>
</dbReference>
<dbReference type="Pfam" id="PF22421">
    <property type="entry name" value="SYY_C-terminal"/>
    <property type="match status" value="1"/>
</dbReference>
<dbReference type="Pfam" id="PF00579">
    <property type="entry name" value="tRNA-synt_1b"/>
    <property type="match status" value="1"/>
</dbReference>
<dbReference type="PRINTS" id="PR01040">
    <property type="entry name" value="TRNASYNTHTYR"/>
</dbReference>
<dbReference type="SUPFAM" id="SSF55174">
    <property type="entry name" value="Alpha-L RNA-binding motif"/>
    <property type="match status" value="1"/>
</dbReference>
<dbReference type="SUPFAM" id="SSF52374">
    <property type="entry name" value="Nucleotidylyl transferase"/>
    <property type="match status" value="1"/>
</dbReference>
<dbReference type="PROSITE" id="PS00178">
    <property type="entry name" value="AA_TRNA_LIGASE_I"/>
    <property type="match status" value="1"/>
</dbReference>
<dbReference type="PROSITE" id="PS50889">
    <property type="entry name" value="S4"/>
    <property type="match status" value="1"/>
</dbReference>
<name>SYY_BRUA2</name>